<name>GALT_PSEPU</name>
<feature type="chain" id="PRO_0000418498" description="Gallate transporter">
    <location>
        <begin position="1"/>
        <end position="449"/>
    </location>
</feature>
<feature type="transmembrane region" description="Helical" evidence="1">
    <location>
        <begin position="26"/>
        <end position="46"/>
    </location>
</feature>
<feature type="transmembrane region" description="Helical" evidence="1">
    <location>
        <begin position="62"/>
        <end position="82"/>
    </location>
</feature>
<feature type="transmembrane region" description="Helical" evidence="1">
    <location>
        <begin position="92"/>
        <end position="112"/>
    </location>
</feature>
<feature type="transmembrane region" description="Helical" evidence="1">
    <location>
        <begin position="123"/>
        <end position="143"/>
    </location>
</feature>
<feature type="transmembrane region" description="Helical" evidence="1">
    <location>
        <begin position="155"/>
        <end position="175"/>
    </location>
</feature>
<feature type="transmembrane region" description="Helical" evidence="1">
    <location>
        <begin position="183"/>
        <end position="203"/>
    </location>
</feature>
<feature type="transmembrane region" description="Helical" evidence="1">
    <location>
        <begin position="262"/>
        <end position="282"/>
    </location>
</feature>
<feature type="transmembrane region" description="Helical" evidence="1">
    <location>
        <begin position="298"/>
        <end position="318"/>
    </location>
</feature>
<feature type="transmembrane region" description="Helical" evidence="1">
    <location>
        <begin position="326"/>
        <end position="346"/>
    </location>
</feature>
<feature type="transmembrane region" description="Helical" evidence="1">
    <location>
        <begin position="349"/>
        <end position="369"/>
    </location>
</feature>
<feature type="transmembrane region" description="Helical" evidence="1">
    <location>
        <begin position="388"/>
        <end position="408"/>
    </location>
</feature>
<feature type="transmembrane region" description="Helical" evidence="1">
    <location>
        <begin position="414"/>
        <end position="434"/>
    </location>
</feature>
<dbReference type="EMBL" id="FN669140">
    <property type="protein sequence ID" value="CBJ94499.1"/>
    <property type="molecule type" value="Genomic_DNA"/>
</dbReference>
<dbReference type="SMR" id="E8ZB61"/>
<dbReference type="GO" id="GO:0005886">
    <property type="term" value="C:plasma membrane"/>
    <property type="evidence" value="ECO:0007669"/>
    <property type="project" value="TreeGrafter"/>
</dbReference>
<dbReference type="GO" id="GO:0046943">
    <property type="term" value="F:carboxylic acid transmembrane transporter activity"/>
    <property type="evidence" value="ECO:0007669"/>
    <property type="project" value="TreeGrafter"/>
</dbReference>
<dbReference type="CDD" id="cd17365">
    <property type="entry name" value="MFS_PcaK_like"/>
    <property type="match status" value="1"/>
</dbReference>
<dbReference type="Gene3D" id="1.20.1250.20">
    <property type="entry name" value="MFS general substrate transporter like domains"/>
    <property type="match status" value="1"/>
</dbReference>
<dbReference type="InterPro" id="IPR011701">
    <property type="entry name" value="MFS"/>
</dbReference>
<dbReference type="InterPro" id="IPR020846">
    <property type="entry name" value="MFS_dom"/>
</dbReference>
<dbReference type="InterPro" id="IPR036259">
    <property type="entry name" value="MFS_trans_sf"/>
</dbReference>
<dbReference type="InterPro" id="IPR005829">
    <property type="entry name" value="Sugar_transporter_CS"/>
</dbReference>
<dbReference type="PANTHER" id="PTHR23508">
    <property type="entry name" value="CARBOXYLIC ACID TRANSPORTER PROTEIN HOMOLOG"/>
    <property type="match status" value="1"/>
</dbReference>
<dbReference type="PANTHER" id="PTHR23508:SF10">
    <property type="entry name" value="CARBOXYLIC ACID TRANSPORTER PROTEIN HOMOLOG"/>
    <property type="match status" value="1"/>
</dbReference>
<dbReference type="Pfam" id="PF07690">
    <property type="entry name" value="MFS_1"/>
    <property type="match status" value="1"/>
</dbReference>
<dbReference type="SUPFAM" id="SSF103473">
    <property type="entry name" value="MFS general substrate transporter"/>
    <property type="match status" value="1"/>
</dbReference>
<dbReference type="PROSITE" id="PS50850">
    <property type="entry name" value="MFS"/>
    <property type="match status" value="1"/>
</dbReference>
<dbReference type="PROSITE" id="PS00216">
    <property type="entry name" value="SUGAR_TRANSPORT_1"/>
    <property type="match status" value="1"/>
</dbReference>
<dbReference type="PROSITE" id="PS00217">
    <property type="entry name" value="SUGAR_TRANSPORT_2"/>
    <property type="match status" value="1"/>
</dbReference>
<proteinExistence type="inferred from homology"/>
<organism>
    <name type="scientific">Pseudomonas putida</name>
    <name type="common">Arthrobacter siderocapsulatus</name>
    <dbReference type="NCBI Taxonomy" id="303"/>
    <lineage>
        <taxon>Bacteria</taxon>
        <taxon>Pseudomonadati</taxon>
        <taxon>Pseudomonadota</taxon>
        <taxon>Gammaproteobacteria</taxon>
        <taxon>Pseudomonadales</taxon>
        <taxon>Pseudomonadaceae</taxon>
        <taxon>Pseudomonas</taxon>
    </lineage>
</organism>
<accession>E8ZB61</accession>
<sequence length="449" mass="47390">MLKPPVDAPIDVKDWIDNRPIAAYQWLILVLCFLIVLFDGFDVAVMGFIAPSLMQDWGLSRAAFGPVMSAGMVGLAIGALTAGPYADRLGRKKVLLIAVSGFSLLSLACAFARNPYELAVLRLLTGIALGAAMPNCTTLLAEYLPTRNRSLMITIMFTGFNMGSGLGGFLSAWLIPHHGWKSVLLAGGLLPLALLPLLWWLLPESARFLAARQAPASQIAAALAKLGGRFAAGTRFTVSEPTTQHKAPARQLFSERYRFGTLALWLTYFMGLLVIYLTMGWLPTLLRDGGLSIERAATITGLFQIGGAVGAIVVGWIMDRRNPNRVIAIAYALGGLCIVSLGALSLESSLLVVGVAAAGFCMSGAQTALNAFAPGYYPTEFRATGVSWMLGIGRFGAIFGSLIGGAVLSLGLGLPLLFTLLGLPAFAAALAILANGHARLRATPAVTAP</sequence>
<gene>
    <name type="primary">galT</name>
</gene>
<protein>
    <recommendedName>
        <fullName>Gallate transporter</fullName>
    </recommendedName>
    <alternativeName>
        <fullName>Gallate permease</fullName>
    </alternativeName>
</protein>
<keyword id="KW-0472">Membrane</keyword>
<keyword id="KW-0762">Sugar transport</keyword>
<keyword id="KW-0812">Transmembrane</keyword>
<keyword id="KW-1133">Transmembrane helix</keyword>
<keyword id="KW-0813">Transport</keyword>
<comment type="function">
    <text evidence="2">Transporter that specifically mediates the uptake of gallate.</text>
</comment>
<comment type="subcellular location">
    <subcellularLocation>
        <location evidence="3">Membrane</location>
        <topology evidence="3">Multi-pass membrane protein</topology>
    </subcellularLocation>
</comment>
<comment type="similarity">
    <text evidence="3">Belongs to the major facilitator superfamily. Sugar transporter (TC 2.A.1.1) family.</text>
</comment>
<comment type="caution">
    <text evidence="4">GalT is not present in P.putida strain KT2440 due to a frameshift.</text>
</comment>
<evidence type="ECO:0000255" key="1"/>
<evidence type="ECO:0000269" key="2">
    <source>
    </source>
</evidence>
<evidence type="ECO:0000305" key="3"/>
<evidence type="ECO:0000305" key="4">
    <source>
    </source>
</evidence>
<reference key="1">
    <citation type="journal article" date="2011" name="Mol. Microbiol.">
        <title>Unravelling the gallic acid degradation pathway in bacteria: the gal cluster from Pseudomonas putida.</title>
        <authorList>
            <person name="Nogales J."/>
            <person name="Canales A."/>
            <person name="Jimenez-Barbero J."/>
            <person name="Serra B."/>
            <person name="Pingarron J.M."/>
            <person name="Garcia J.L."/>
            <person name="Diaz E."/>
        </authorList>
    </citation>
    <scope>NUCLEOTIDE SEQUENCE [GENOMIC DNA]</scope>
    <scope>FUNCTION</scope>
    <source>
        <strain>KTGAL</strain>
    </source>
</reference>